<organism>
    <name type="scientific">Desulforapulum autotrophicum (strain ATCC 43914 / DSM 3382 / VKM B-1955 / HRM2)</name>
    <name type="common">Desulfobacterium autotrophicum</name>
    <dbReference type="NCBI Taxonomy" id="177437"/>
    <lineage>
        <taxon>Bacteria</taxon>
        <taxon>Pseudomonadati</taxon>
        <taxon>Thermodesulfobacteriota</taxon>
        <taxon>Desulfobacteria</taxon>
        <taxon>Desulfobacterales</taxon>
        <taxon>Desulfobacteraceae</taxon>
        <taxon>Desulforapulum</taxon>
    </lineage>
</organism>
<proteinExistence type="inferred from homology"/>
<feature type="chain" id="PRO_1000212244" description="Ribosomal RNA small subunit methyltransferase A">
    <location>
        <begin position="1"/>
        <end position="284"/>
    </location>
</feature>
<feature type="binding site" evidence="1">
    <location>
        <position position="22"/>
    </location>
    <ligand>
        <name>S-adenosyl-L-methionine</name>
        <dbReference type="ChEBI" id="CHEBI:59789"/>
    </ligand>
</feature>
<feature type="binding site" evidence="1">
    <location>
        <position position="24"/>
    </location>
    <ligand>
        <name>S-adenosyl-L-methionine</name>
        <dbReference type="ChEBI" id="CHEBI:59789"/>
    </ligand>
</feature>
<feature type="binding site" evidence="1">
    <location>
        <position position="49"/>
    </location>
    <ligand>
        <name>S-adenosyl-L-methionine</name>
        <dbReference type="ChEBI" id="CHEBI:59789"/>
    </ligand>
</feature>
<feature type="binding site" evidence="1">
    <location>
        <position position="70"/>
    </location>
    <ligand>
        <name>S-adenosyl-L-methionine</name>
        <dbReference type="ChEBI" id="CHEBI:59789"/>
    </ligand>
</feature>
<feature type="binding site" evidence="1">
    <location>
        <position position="97"/>
    </location>
    <ligand>
        <name>S-adenosyl-L-methionine</name>
        <dbReference type="ChEBI" id="CHEBI:59789"/>
    </ligand>
</feature>
<feature type="binding site" evidence="1">
    <location>
        <position position="117"/>
    </location>
    <ligand>
        <name>S-adenosyl-L-methionine</name>
        <dbReference type="ChEBI" id="CHEBI:59789"/>
    </ligand>
</feature>
<keyword id="KW-0963">Cytoplasm</keyword>
<keyword id="KW-0489">Methyltransferase</keyword>
<keyword id="KW-1185">Reference proteome</keyword>
<keyword id="KW-0694">RNA-binding</keyword>
<keyword id="KW-0698">rRNA processing</keyword>
<keyword id="KW-0949">S-adenosyl-L-methionine</keyword>
<keyword id="KW-0808">Transferase</keyword>
<sequence length="284" mass="31955">MTYPGILLKKQQLMARKELGQNFLSDPNAARMIVTKAGISDQDRVLEIGPGLGALTIPAAKLARDLVAVEKDTRLAGILMEELKRESIENVELINNDILHQDLNTLFRGEKIIVIGNLPYNISSQVLFMLVENRHLIKRAVLMFQKELTERISASPGGRDYGRLSVVMQYCSTVKKIADLPPHLFFPKPAVDSRVIEVNFFETTPYSGERERFLFKVIKAAFSKRRKTLRNSLAGGELDIDTKVSAKILETAEIDPVRRAETLSVEEYSRLSDALWSMHGSEEV</sequence>
<dbReference type="EC" id="2.1.1.182" evidence="1"/>
<dbReference type="EMBL" id="CP001087">
    <property type="protein sequence ID" value="ACN13388.1"/>
    <property type="molecule type" value="Genomic_DNA"/>
</dbReference>
<dbReference type="SMR" id="C0QFJ2"/>
<dbReference type="STRING" id="177437.HRM2_02660"/>
<dbReference type="KEGG" id="dat:HRM2_02660"/>
<dbReference type="eggNOG" id="COG0030">
    <property type="taxonomic scope" value="Bacteria"/>
</dbReference>
<dbReference type="HOGENOM" id="CLU_041220_0_1_7"/>
<dbReference type="OrthoDB" id="9814755at2"/>
<dbReference type="Proteomes" id="UP000000442">
    <property type="component" value="Chromosome"/>
</dbReference>
<dbReference type="GO" id="GO:0005829">
    <property type="term" value="C:cytosol"/>
    <property type="evidence" value="ECO:0007669"/>
    <property type="project" value="TreeGrafter"/>
</dbReference>
<dbReference type="GO" id="GO:0052908">
    <property type="term" value="F:16S rRNA (adenine(1518)-N(6)/adenine(1519)-N(6))-dimethyltransferase activity"/>
    <property type="evidence" value="ECO:0007669"/>
    <property type="project" value="UniProtKB-EC"/>
</dbReference>
<dbReference type="GO" id="GO:0003723">
    <property type="term" value="F:RNA binding"/>
    <property type="evidence" value="ECO:0007669"/>
    <property type="project" value="UniProtKB-KW"/>
</dbReference>
<dbReference type="CDD" id="cd02440">
    <property type="entry name" value="AdoMet_MTases"/>
    <property type="match status" value="1"/>
</dbReference>
<dbReference type="Gene3D" id="1.10.8.100">
    <property type="entry name" value="Ribosomal RNA adenine dimethylase-like, domain 2"/>
    <property type="match status" value="1"/>
</dbReference>
<dbReference type="Gene3D" id="3.40.50.150">
    <property type="entry name" value="Vaccinia Virus protein VP39"/>
    <property type="match status" value="1"/>
</dbReference>
<dbReference type="HAMAP" id="MF_00607">
    <property type="entry name" value="16SrRNA_methyltr_A"/>
    <property type="match status" value="1"/>
</dbReference>
<dbReference type="InterPro" id="IPR001737">
    <property type="entry name" value="KsgA/Erm"/>
</dbReference>
<dbReference type="InterPro" id="IPR023165">
    <property type="entry name" value="rRNA_Ade_diMease-like_C"/>
</dbReference>
<dbReference type="InterPro" id="IPR020596">
    <property type="entry name" value="rRNA_Ade_Mease_Trfase_CS"/>
</dbReference>
<dbReference type="InterPro" id="IPR020598">
    <property type="entry name" value="rRNA_Ade_methylase_Trfase_N"/>
</dbReference>
<dbReference type="InterPro" id="IPR011530">
    <property type="entry name" value="rRNA_adenine_dimethylase"/>
</dbReference>
<dbReference type="InterPro" id="IPR029063">
    <property type="entry name" value="SAM-dependent_MTases_sf"/>
</dbReference>
<dbReference type="NCBIfam" id="TIGR00755">
    <property type="entry name" value="ksgA"/>
    <property type="match status" value="1"/>
</dbReference>
<dbReference type="PANTHER" id="PTHR11727">
    <property type="entry name" value="DIMETHYLADENOSINE TRANSFERASE"/>
    <property type="match status" value="1"/>
</dbReference>
<dbReference type="PANTHER" id="PTHR11727:SF7">
    <property type="entry name" value="DIMETHYLADENOSINE TRANSFERASE-RELATED"/>
    <property type="match status" value="1"/>
</dbReference>
<dbReference type="Pfam" id="PF00398">
    <property type="entry name" value="RrnaAD"/>
    <property type="match status" value="1"/>
</dbReference>
<dbReference type="SMART" id="SM00650">
    <property type="entry name" value="rADc"/>
    <property type="match status" value="1"/>
</dbReference>
<dbReference type="SUPFAM" id="SSF53335">
    <property type="entry name" value="S-adenosyl-L-methionine-dependent methyltransferases"/>
    <property type="match status" value="1"/>
</dbReference>
<dbReference type="PROSITE" id="PS01131">
    <property type="entry name" value="RRNA_A_DIMETH"/>
    <property type="match status" value="1"/>
</dbReference>
<dbReference type="PROSITE" id="PS51689">
    <property type="entry name" value="SAM_RNA_A_N6_MT"/>
    <property type="match status" value="1"/>
</dbReference>
<accession>C0QFJ2</accession>
<evidence type="ECO:0000255" key="1">
    <source>
        <dbReference type="HAMAP-Rule" id="MF_00607"/>
    </source>
</evidence>
<reference key="1">
    <citation type="journal article" date="2009" name="Environ. Microbiol.">
        <title>Genome sequence of Desulfobacterium autotrophicum HRM2, a marine sulfate reducer oxidizing organic carbon completely to carbon dioxide.</title>
        <authorList>
            <person name="Strittmatter A.W."/>
            <person name="Liesegang H."/>
            <person name="Rabus R."/>
            <person name="Decker I."/>
            <person name="Amann J."/>
            <person name="Andres S."/>
            <person name="Henne A."/>
            <person name="Fricke W.F."/>
            <person name="Martinez-Arias R."/>
            <person name="Bartels D."/>
            <person name="Goesmann A."/>
            <person name="Krause L."/>
            <person name="Puehler A."/>
            <person name="Klenk H.P."/>
            <person name="Richter M."/>
            <person name="Schuler M."/>
            <person name="Gloeckner F.O."/>
            <person name="Meyerdierks A."/>
            <person name="Gottschalk G."/>
            <person name="Amann R."/>
        </authorList>
    </citation>
    <scope>NUCLEOTIDE SEQUENCE [LARGE SCALE GENOMIC DNA]</scope>
    <source>
        <strain>ATCC 43914 / DSM 3382 / VKM B-1955 / HRM2</strain>
    </source>
</reference>
<comment type="function">
    <text evidence="1">Specifically dimethylates two adjacent adenosines (A1518 and A1519) in the loop of a conserved hairpin near the 3'-end of 16S rRNA in the 30S particle. May play a critical role in biogenesis of 30S subunits.</text>
</comment>
<comment type="catalytic activity">
    <reaction evidence="1">
        <text>adenosine(1518)/adenosine(1519) in 16S rRNA + 4 S-adenosyl-L-methionine = N(6)-dimethyladenosine(1518)/N(6)-dimethyladenosine(1519) in 16S rRNA + 4 S-adenosyl-L-homocysteine + 4 H(+)</text>
        <dbReference type="Rhea" id="RHEA:19609"/>
        <dbReference type="Rhea" id="RHEA-COMP:10232"/>
        <dbReference type="Rhea" id="RHEA-COMP:10233"/>
        <dbReference type="ChEBI" id="CHEBI:15378"/>
        <dbReference type="ChEBI" id="CHEBI:57856"/>
        <dbReference type="ChEBI" id="CHEBI:59789"/>
        <dbReference type="ChEBI" id="CHEBI:74411"/>
        <dbReference type="ChEBI" id="CHEBI:74493"/>
        <dbReference type="EC" id="2.1.1.182"/>
    </reaction>
</comment>
<comment type="subcellular location">
    <subcellularLocation>
        <location evidence="1">Cytoplasm</location>
    </subcellularLocation>
</comment>
<comment type="similarity">
    <text evidence="1">Belongs to the class I-like SAM-binding methyltransferase superfamily. rRNA adenine N(6)-methyltransferase family. RsmA subfamily.</text>
</comment>
<gene>
    <name evidence="1" type="primary">rsmA</name>
    <name evidence="1" type="synonym">ksgA</name>
    <name type="ordered locus">HRM2_02660</name>
</gene>
<protein>
    <recommendedName>
        <fullName evidence="1">Ribosomal RNA small subunit methyltransferase A</fullName>
        <ecNumber evidence="1">2.1.1.182</ecNumber>
    </recommendedName>
    <alternativeName>
        <fullName evidence="1">16S rRNA (adenine(1518)-N(6)/adenine(1519)-N(6))-dimethyltransferase</fullName>
    </alternativeName>
    <alternativeName>
        <fullName evidence="1">16S rRNA dimethyladenosine transferase</fullName>
    </alternativeName>
    <alternativeName>
        <fullName evidence="1">16S rRNA dimethylase</fullName>
    </alternativeName>
    <alternativeName>
        <fullName evidence="1">S-adenosylmethionine-6-N', N'-adenosyl(rRNA) dimethyltransferase</fullName>
    </alternativeName>
</protein>
<name>RSMA_DESAH</name>